<organism>
    <name type="scientific">Porphyromonas gingivalis (strain ATCC BAA-308 / W83)</name>
    <dbReference type="NCBI Taxonomy" id="242619"/>
    <lineage>
        <taxon>Bacteria</taxon>
        <taxon>Pseudomonadati</taxon>
        <taxon>Bacteroidota</taxon>
        <taxon>Bacteroidia</taxon>
        <taxon>Bacteroidales</taxon>
        <taxon>Porphyromonadaceae</taxon>
        <taxon>Porphyromonas</taxon>
    </lineage>
</organism>
<sequence length="419" mass="46633">MLYYLFDYLEKLQLPGARLFHYVSFRSAVAIVLALLLATVIGNRIIERLRKAQIGETIRDLGLEGQLSKKGTPTMGGLIIIISILIPTLLLARLDNVYILLMIVTTVLLGSLGFLDDYIKVFRKKKEGLHGRYKIIGQVGLGFIIGIVLYMNPAVVIKENSEVLRDGQVERVHFNKQEVKSTKTTIPFVKNNNFDYADILPLEGKTKVLFGWILFVCVAVVVVTFISNCANLTDGLDGLATGSSAIIGVVLAIFAYVSSHIEMASYLNIMFIPGAEELTIFAFAFVGATIGFLWYNAYPAQVFMGDTGSLTLGGIIAVFALIIRKEMLLPILCFVFIIEGLSVMIQVFYFKLTKRRTGEGRRIFKMTPLHHHFQKPGNAGIDAWLQKPMQAIPESKITVRFWLVGIIMAAITIATLKMR</sequence>
<evidence type="ECO:0000255" key="1">
    <source>
        <dbReference type="HAMAP-Rule" id="MF_00038"/>
    </source>
</evidence>
<keyword id="KW-0131">Cell cycle</keyword>
<keyword id="KW-0132">Cell division</keyword>
<keyword id="KW-0997">Cell inner membrane</keyword>
<keyword id="KW-1003">Cell membrane</keyword>
<keyword id="KW-0133">Cell shape</keyword>
<keyword id="KW-0961">Cell wall biogenesis/degradation</keyword>
<keyword id="KW-0460">Magnesium</keyword>
<keyword id="KW-0472">Membrane</keyword>
<keyword id="KW-0479">Metal-binding</keyword>
<keyword id="KW-0573">Peptidoglycan synthesis</keyword>
<keyword id="KW-1185">Reference proteome</keyword>
<keyword id="KW-0808">Transferase</keyword>
<keyword id="KW-0812">Transmembrane</keyword>
<keyword id="KW-1133">Transmembrane helix</keyword>
<dbReference type="EC" id="2.7.8.13" evidence="1"/>
<dbReference type="EMBL" id="AE015924">
    <property type="protein sequence ID" value="AAQ65764.1"/>
    <property type="molecule type" value="Genomic_DNA"/>
</dbReference>
<dbReference type="RefSeq" id="WP_004585117.1">
    <property type="nucleotide sequence ID" value="NC_002950.2"/>
</dbReference>
<dbReference type="SMR" id="Q7MWM6"/>
<dbReference type="STRING" id="242619.PG_0577"/>
<dbReference type="EnsemblBacteria" id="AAQ65764">
    <property type="protein sequence ID" value="AAQ65764"/>
    <property type="gene ID" value="PG_0577"/>
</dbReference>
<dbReference type="KEGG" id="pgi:PG_0577"/>
<dbReference type="eggNOG" id="COG0472">
    <property type="taxonomic scope" value="Bacteria"/>
</dbReference>
<dbReference type="HOGENOM" id="CLU_023982_0_0_10"/>
<dbReference type="UniPathway" id="UPA00219"/>
<dbReference type="Proteomes" id="UP000000588">
    <property type="component" value="Chromosome"/>
</dbReference>
<dbReference type="GO" id="GO:0005886">
    <property type="term" value="C:plasma membrane"/>
    <property type="evidence" value="ECO:0007669"/>
    <property type="project" value="UniProtKB-SubCell"/>
</dbReference>
<dbReference type="GO" id="GO:0046872">
    <property type="term" value="F:metal ion binding"/>
    <property type="evidence" value="ECO:0007669"/>
    <property type="project" value="UniProtKB-KW"/>
</dbReference>
<dbReference type="GO" id="GO:0008963">
    <property type="term" value="F:phospho-N-acetylmuramoyl-pentapeptide-transferase activity"/>
    <property type="evidence" value="ECO:0007669"/>
    <property type="project" value="UniProtKB-UniRule"/>
</dbReference>
<dbReference type="GO" id="GO:0051992">
    <property type="term" value="F:UDP-N-acetylmuramoyl-L-alanyl-D-glutamyl-meso-2,6-diaminopimelyl-D-alanyl-D-alanine:undecaprenyl-phosphate transferase activity"/>
    <property type="evidence" value="ECO:0007669"/>
    <property type="project" value="RHEA"/>
</dbReference>
<dbReference type="GO" id="GO:0051301">
    <property type="term" value="P:cell division"/>
    <property type="evidence" value="ECO:0007669"/>
    <property type="project" value="UniProtKB-KW"/>
</dbReference>
<dbReference type="GO" id="GO:0071555">
    <property type="term" value="P:cell wall organization"/>
    <property type="evidence" value="ECO:0007669"/>
    <property type="project" value="UniProtKB-KW"/>
</dbReference>
<dbReference type="GO" id="GO:0009252">
    <property type="term" value="P:peptidoglycan biosynthetic process"/>
    <property type="evidence" value="ECO:0007669"/>
    <property type="project" value="UniProtKB-UniRule"/>
</dbReference>
<dbReference type="GO" id="GO:0008360">
    <property type="term" value="P:regulation of cell shape"/>
    <property type="evidence" value="ECO:0007669"/>
    <property type="project" value="UniProtKB-KW"/>
</dbReference>
<dbReference type="CDD" id="cd06852">
    <property type="entry name" value="GT_MraY"/>
    <property type="match status" value="1"/>
</dbReference>
<dbReference type="HAMAP" id="MF_00038">
    <property type="entry name" value="MraY"/>
    <property type="match status" value="1"/>
</dbReference>
<dbReference type="InterPro" id="IPR000715">
    <property type="entry name" value="Glycosyl_transferase_4"/>
</dbReference>
<dbReference type="InterPro" id="IPR003524">
    <property type="entry name" value="PNAcMuramoyl-5peptid_Trfase"/>
</dbReference>
<dbReference type="InterPro" id="IPR018480">
    <property type="entry name" value="PNAcMuramoyl-5peptid_Trfase_CS"/>
</dbReference>
<dbReference type="NCBIfam" id="TIGR00445">
    <property type="entry name" value="mraY"/>
    <property type="match status" value="1"/>
</dbReference>
<dbReference type="PANTHER" id="PTHR22926">
    <property type="entry name" value="PHOSPHO-N-ACETYLMURAMOYL-PENTAPEPTIDE-TRANSFERASE"/>
    <property type="match status" value="1"/>
</dbReference>
<dbReference type="PANTHER" id="PTHR22926:SF5">
    <property type="entry name" value="PHOSPHO-N-ACETYLMURAMOYL-PENTAPEPTIDE-TRANSFERASE HOMOLOG"/>
    <property type="match status" value="1"/>
</dbReference>
<dbReference type="Pfam" id="PF00953">
    <property type="entry name" value="Glycos_transf_4"/>
    <property type="match status" value="1"/>
</dbReference>
<dbReference type="Pfam" id="PF10555">
    <property type="entry name" value="MraY_sig1"/>
    <property type="match status" value="1"/>
</dbReference>
<dbReference type="PROSITE" id="PS01347">
    <property type="entry name" value="MRAY_1"/>
    <property type="match status" value="1"/>
</dbReference>
<dbReference type="PROSITE" id="PS01348">
    <property type="entry name" value="MRAY_2"/>
    <property type="match status" value="1"/>
</dbReference>
<gene>
    <name evidence="1" type="primary">mraY</name>
    <name type="ordered locus">PG_0577</name>
</gene>
<feature type="chain" id="PRO_0000108866" description="Phospho-N-acetylmuramoyl-pentapeptide-transferase">
    <location>
        <begin position="1"/>
        <end position="419"/>
    </location>
</feature>
<feature type="transmembrane region" description="Helical" evidence="1">
    <location>
        <begin position="22"/>
        <end position="42"/>
    </location>
</feature>
<feature type="transmembrane region" description="Helical" evidence="1">
    <location>
        <begin position="72"/>
        <end position="92"/>
    </location>
</feature>
<feature type="transmembrane region" description="Helical" evidence="1">
    <location>
        <begin position="99"/>
        <end position="119"/>
    </location>
</feature>
<feature type="transmembrane region" description="Helical" evidence="1">
    <location>
        <begin position="135"/>
        <end position="155"/>
    </location>
</feature>
<feature type="transmembrane region" description="Helical" evidence="1">
    <location>
        <begin position="208"/>
        <end position="228"/>
    </location>
</feature>
<feature type="transmembrane region" description="Helical" evidence="1">
    <location>
        <begin position="238"/>
        <end position="258"/>
    </location>
</feature>
<feature type="transmembrane region" description="Helical" evidence="1">
    <location>
        <begin position="278"/>
        <end position="298"/>
    </location>
</feature>
<feature type="transmembrane region" description="Helical" evidence="1">
    <location>
        <begin position="303"/>
        <end position="323"/>
    </location>
</feature>
<feature type="transmembrane region" description="Helical" evidence="1">
    <location>
        <begin position="328"/>
        <end position="348"/>
    </location>
</feature>
<feature type="transmembrane region" description="Helical" evidence="1">
    <location>
        <begin position="396"/>
        <end position="416"/>
    </location>
</feature>
<accession>Q7MWM6</accession>
<proteinExistence type="inferred from homology"/>
<name>MRAY_PORGI</name>
<reference key="1">
    <citation type="journal article" date="2003" name="J. Bacteriol.">
        <title>Complete genome sequence of the oral pathogenic bacterium Porphyromonas gingivalis strain W83.</title>
        <authorList>
            <person name="Nelson K.E."/>
            <person name="Fleischmann R.D."/>
            <person name="DeBoy R.T."/>
            <person name="Paulsen I.T."/>
            <person name="Fouts D.E."/>
            <person name="Eisen J.A."/>
            <person name="Daugherty S.C."/>
            <person name="Dodson R.J."/>
            <person name="Durkin A.S."/>
            <person name="Gwinn M.L."/>
            <person name="Haft D.H."/>
            <person name="Kolonay J.F."/>
            <person name="Nelson W.C."/>
            <person name="Mason T.M."/>
            <person name="Tallon L."/>
            <person name="Gray J."/>
            <person name="Granger D."/>
            <person name="Tettelin H."/>
            <person name="Dong H."/>
            <person name="Galvin J.L."/>
            <person name="Duncan M.J."/>
            <person name="Dewhirst F.E."/>
            <person name="Fraser C.M."/>
        </authorList>
    </citation>
    <scope>NUCLEOTIDE SEQUENCE [LARGE SCALE GENOMIC DNA]</scope>
    <source>
        <strain>ATCC BAA-308 / W83</strain>
    </source>
</reference>
<comment type="function">
    <text evidence="1">Catalyzes the initial step of the lipid cycle reactions in the biosynthesis of the cell wall peptidoglycan: transfers peptidoglycan precursor phospho-MurNAc-pentapeptide from UDP-MurNAc-pentapeptide onto the lipid carrier undecaprenyl phosphate, yielding undecaprenyl-pyrophosphoryl-MurNAc-pentapeptide, known as lipid I.</text>
</comment>
<comment type="catalytic activity">
    <reaction evidence="1">
        <text>UDP-N-acetyl-alpha-D-muramoyl-L-alanyl-gamma-D-glutamyl-meso-2,6-diaminopimeloyl-D-alanyl-D-alanine + di-trans,octa-cis-undecaprenyl phosphate = di-trans,octa-cis-undecaprenyl diphospho-N-acetyl-alpha-D-muramoyl-L-alanyl-D-glutamyl-meso-2,6-diaminopimeloyl-D-alanyl-D-alanine + UMP</text>
        <dbReference type="Rhea" id="RHEA:28386"/>
        <dbReference type="ChEBI" id="CHEBI:57865"/>
        <dbReference type="ChEBI" id="CHEBI:60392"/>
        <dbReference type="ChEBI" id="CHEBI:61386"/>
        <dbReference type="ChEBI" id="CHEBI:61387"/>
        <dbReference type="EC" id="2.7.8.13"/>
    </reaction>
</comment>
<comment type="cofactor">
    <cofactor evidence="1">
        <name>Mg(2+)</name>
        <dbReference type="ChEBI" id="CHEBI:18420"/>
    </cofactor>
</comment>
<comment type="pathway">
    <text evidence="1">Cell wall biogenesis; peptidoglycan biosynthesis.</text>
</comment>
<comment type="subcellular location">
    <subcellularLocation>
        <location evidence="1">Cell inner membrane</location>
        <topology evidence="1">Multi-pass membrane protein</topology>
    </subcellularLocation>
</comment>
<comment type="similarity">
    <text evidence="1">Belongs to the glycosyltransferase 4 family. MraY subfamily.</text>
</comment>
<protein>
    <recommendedName>
        <fullName evidence="1">Phospho-N-acetylmuramoyl-pentapeptide-transferase</fullName>
        <ecNumber evidence="1">2.7.8.13</ecNumber>
    </recommendedName>
    <alternativeName>
        <fullName evidence="1">UDP-MurNAc-pentapeptide phosphotransferase</fullName>
    </alternativeName>
</protein>